<sequence length="256" mass="28932">MRYQASPALAKAPRALLCIHGAGCSPAIFRVQLSKLRAALREDFEFVYVTAPFPSSAGPGILPVFADLGPYYSWFESSSGNNNNGPSVGERLAAVHDPIRRTIVDWQTQHPHIPIVGAIGFSEGALVTTLLLWQQQMGRLPWLPRMSVAMLICPWYQDEASQYMRNEVMENHDDDHDSKDTEWQEELVIRIPTLHLQGRDDFALAGSKMLVARHFSPREAQVLEFAGQHQFPNRPRDVLEVINRFRKLCVTVQTLE</sequence>
<protein>
    <recommendedName>
        <fullName evidence="20">Dihydromonacolin L-[lovastatin nonaketide synthase] thioesterase</fullName>
        <ecNumber evidence="13">3.1.2.31</ecNumber>
    </recommendedName>
    <alternativeName>
        <fullName evidence="19">Esterase lovG</fullName>
    </alternativeName>
    <alternativeName>
        <fullName evidence="19">Lovastatin biosynthesis cluster protein G</fullName>
    </alternativeName>
</protein>
<name>LOVG_ASPTN</name>
<dbReference type="EC" id="3.1.2.31" evidence="13"/>
<dbReference type="EMBL" id="CH476609">
    <property type="protein sequence ID" value="EAU29411.1"/>
    <property type="molecule type" value="Genomic_DNA"/>
</dbReference>
<dbReference type="RefSeq" id="XP_001209264.1">
    <property type="nucleotide sequence ID" value="XM_001209264.1"/>
</dbReference>
<dbReference type="SMR" id="Q0C8M2"/>
<dbReference type="STRING" id="341663.Q0C8M2"/>
<dbReference type="ESTHER" id="asptn-LOVG">
    <property type="family name" value="FSH1"/>
</dbReference>
<dbReference type="EnsemblFungi" id="EAU29411">
    <property type="protein sequence ID" value="EAU29411"/>
    <property type="gene ID" value="ATEG_09962"/>
</dbReference>
<dbReference type="GeneID" id="4319608"/>
<dbReference type="KEGG" id="ag:EAU29411"/>
<dbReference type="VEuPathDB" id="FungiDB:ATEG_09962"/>
<dbReference type="eggNOG" id="KOG2551">
    <property type="taxonomic scope" value="Eukaryota"/>
</dbReference>
<dbReference type="HOGENOM" id="CLU_051938_0_2_1"/>
<dbReference type="OMA" id="SGNIFRM"/>
<dbReference type="OrthoDB" id="414698at2759"/>
<dbReference type="BioCyc" id="MetaCyc:MONOMER-18783"/>
<dbReference type="UniPathway" id="UPA00875"/>
<dbReference type="Proteomes" id="UP000007963">
    <property type="component" value="Unassembled WGS sequence"/>
</dbReference>
<dbReference type="GO" id="GO:0005737">
    <property type="term" value="C:cytoplasm"/>
    <property type="evidence" value="ECO:0007669"/>
    <property type="project" value="TreeGrafter"/>
</dbReference>
<dbReference type="GO" id="GO:0005634">
    <property type="term" value="C:nucleus"/>
    <property type="evidence" value="ECO:0007669"/>
    <property type="project" value="TreeGrafter"/>
</dbReference>
<dbReference type="GO" id="GO:0016788">
    <property type="term" value="F:hydrolase activity, acting on ester bonds"/>
    <property type="evidence" value="ECO:0000314"/>
    <property type="project" value="UniProtKB"/>
</dbReference>
<dbReference type="GO" id="GO:0140735">
    <property type="term" value="P:lovastatin biosynthetic process"/>
    <property type="evidence" value="ECO:0000314"/>
    <property type="project" value="GO_Central"/>
</dbReference>
<dbReference type="GO" id="GO:0030639">
    <property type="term" value="P:polyketide biosynthetic process"/>
    <property type="evidence" value="ECO:0000315"/>
    <property type="project" value="UniProtKB"/>
</dbReference>
<dbReference type="Gene3D" id="3.40.50.1820">
    <property type="entry name" value="alpha/beta hydrolase"/>
    <property type="match status" value="1"/>
</dbReference>
<dbReference type="InterPro" id="IPR029058">
    <property type="entry name" value="AB_hydrolase_fold"/>
</dbReference>
<dbReference type="InterPro" id="IPR005645">
    <property type="entry name" value="FSH-like_dom"/>
</dbReference>
<dbReference type="InterPro" id="IPR050593">
    <property type="entry name" value="LovG"/>
</dbReference>
<dbReference type="PANTHER" id="PTHR48070:SF3">
    <property type="entry name" value="ESTERASE DBAE-RELATED"/>
    <property type="match status" value="1"/>
</dbReference>
<dbReference type="PANTHER" id="PTHR48070">
    <property type="entry name" value="ESTERASE OVCA2"/>
    <property type="match status" value="1"/>
</dbReference>
<dbReference type="Pfam" id="PF03959">
    <property type="entry name" value="FSH1"/>
    <property type="match status" value="1"/>
</dbReference>
<dbReference type="SUPFAM" id="SSF53474">
    <property type="entry name" value="alpha/beta-Hydrolases"/>
    <property type="match status" value="1"/>
</dbReference>
<keyword id="KW-0378">Hydrolase</keyword>
<keyword id="KW-1185">Reference proteome</keyword>
<gene>
    <name evidence="19" type="primary">lovG</name>
    <name type="ORF">ATEG_09962</name>
</gene>
<comment type="function">
    <text evidence="2 3 4 5 6 7 8 9 10 11 12 13 14 17">Esterase; part of the gene cluster that mediates the biosynthesis of lovastatin (also known as mevinolin, mevacor or monacolin K), a hypolipidemic inhibitor of (3S)-hydroxymethylglutaryl-coenzyme A (HMG-CoA) reductase (HMGR) (PubMed:10334994, PubMed:12929390, PubMed:21495633, PubMed:39515266). The first step in the biosynthesis of lovastatin is the production of dihydromonacolin L acid by the lovastatin nonaketide synthase lovB and the trans-acting enoyl reductase lovC via condensation of one acetyl-CoA unit and 8 malonyl-CoA units (PubMed:10334994, PubMed:10381407, PubMed:19900898, PubMed:22733743). Dihydromonacolin L acid is released from lovB by the thioesterase lovG (PubMed:23653178). Next, dihydromonacolin L acid is oxidized by the dihydromonacolin L monooxygenase lovA twice to form monacolin J acid (PubMed:12929390, PubMed:21495633). The 2-methylbutyrate moiety of lovastatin is synthesized by the lovastatin diketide synthase lovF via condensation of one acetyl-CoA unit and one malonyl-CoA unit (PubMed:19530726, PubMed:21069965). Finally, the covalent attachment of this moiety to monacolin J acid is catalyzed by the transesterase lovD to yield lovastatin (PubMed:10334994, PubMed:17113998, PubMed:18988191, PubMed:19875080, PubMed:24727900). LovD has broad substrate specificity and can also convert monacolin J to simvastatin using alpha-dimethylbutanoyl-S-methyl-3-mercaptopropionate (DMB-S-MMP) as the thioester acyl donor, and can also catalyze the reverse reaction and function as hydrolase in vitro (PubMed:19875080). LovD has much higher activity with LovF-bound 2-methylbutanoate than with free diketide substrates (PubMed:21069965).</text>
</comment>
<comment type="function">
    <text evidence="13">Esterase that catalyzes the release of covalently bound dihydromonacolin L from LovB during lovastatin biosynthesis.</text>
</comment>
<comment type="catalytic activity">
    <reaction evidence="13">
        <text>dihydromonacolin L-[lovastatin nonaketide synthase] + H2O = holo-[lovastatin nonaketide synthase] + dihydromonacolin L carboxylate + H(+)</text>
        <dbReference type="Rhea" id="RHEA:11592"/>
        <dbReference type="Rhea" id="RHEA-COMP:10042"/>
        <dbReference type="Rhea" id="RHEA-COMP:10043"/>
        <dbReference type="ChEBI" id="CHEBI:15377"/>
        <dbReference type="ChEBI" id="CHEBI:15378"/>
        <dbReference type="ChEBI" id="CHEBI:64479"/>
        <dbReference type="ChEBI" id="CHEBI:79031"/>
        <dbReference type="ChEBI" id="CHEBI:79032"/>
        <dbReference type="EC" id="3.1.2.31"/>
    </reaction>
    <physiologicalReaction direction="left-to-right" evidence="13">
        <dbReference type="Rhea" id="RHEA:11593"/>
    </physiologicalReaction>
</comment>
<comment type="pathway">
    <text evidence="13 17">Polyketide biosynthesis; lovastatin biosynthesis.</text>
</comment>
<comment type="disruption phenotype">
    <text evidence="13">Strongly reduced lovastatin biosynthesis. Low levels of lovastatin are released due to complementation by other esterases.</text>
</comment>
<comment type="biotechnology">
    <text evidence="15 16 18">Lovastatin acts as a hypolipidemic agent that works as inhibitor of (3S)-hydroxymethylglutaryl-coenzyme A (HMG-CoA) reductase (HMGR) which reduces HMG-CoA to mevalonate and is the key step in cholesterol biosynthesis (PubMed:6933445). Lovastatin, simvastatin and related compounds are widely used to treat hypercholesteremia and reduce the risk of cardiovascular disease (PubMed:6933445). Furthermore, statins such as lovastatin were found to be anticancer agents (PubMed:29236027, PubMed:29932104).</text>
</comment>
<comment type="similarity">
    <text evidence="20">Belongs to the LovG family.</text>
</comment>
<accession>Q0C8M2</accession>
<feature type="chain" id="PRO_0000430266" description="Dihydromonacolin L-[lovastatin nonaketide synthase] thioesterase">
    <location>
        <begin position="1"/>
        <end position="256"/>
    </location>
</feature>
<feature type="active site" description="Charge relay system" evidence="1">
    <location>
        <position position="122"/>
    </location>
</feature>
<feature type="active site" description="Charge relay system" evidence="1">
    <location>
        <position position="201"/>
    </location>
</feature>
<feature type="active site" description="Charge relay system" evidence="1">
    <location>
        <position position="229"/>
    </location>
</feature>
<organism>
    <name type="scientific">Aspergillus terreus (strain NIH 2624 / FGSC A1156)</name>
    <dbReference type="NCBI Taxonomy" id="341663"/>
    <lineage>
        <taxon>Eukaryota</taxon>
        <taxon>Fungi</taxon>
        <taxon>Dikarya</taxon>
        <taxon>Ascomycota</taxon>
        <taxon>Pezizomycotina</taxon>
        <taxon>Eurotiomycetes</taxon>
        <taxon>Eurotiomycetidae</taxon>
        <taxon>Eurotiales</taxon>
        <taxon>Aspergillaceae</taxon>
        <taxon>Aspergillus</taxon>
        <taxon>Aspergillus subgen. Circumdati</taxon>
    </lineage>
</organism>
<proteinExistence type="evidence at protein level"/>
<reference key="1">
    <citation type="submission" date="2005-09" db="EMBL/GenBank/DDBJ databases">
        <title>Annotation of the Aspergillus terreus NIH2624 genome.</title>
        <authorList>
            <person name="Birren B.W."/>
            <person name="Lander E.S."/>
            <person name="Galagan J.E."/>
            <person name="Nusbaum C."/>
            <person name="Devon K."/>
            <person name="Henn M."/>
            <person name="Ma L.-J."/>
            <person name="Jaffe D.B."/>
            <person name="Butler J."/>
            <person name="Alvarez P."/>
            <person name="Gnerre S."/>
            <person name="Grabherr M."/>
            <person name="Kleber M."/>
            <person name="Mauceli E.W."/>
            <person name="Brockman W."/>
            <person name="Rounsley S."/>
            <person name="Young S.K."/>
            <person name="LaButti K."/>
            <person name="Pushparaj V."/>
            <person name="DeCaprio D."/>
            <person name="Crawford M."/>
            <person name="Koehrsen M."/>
            <person name="Engels R."/>
            <person name="Montgomery P."/>
            <person name="Pearson M."/>
            <person name="Howarth C."/>
            <person name="Larson L."/>
            <person name="Luoma S."/>
            <person name="White J."/>
            <person name="Alvarado L."/>
            <person name="Kodira C.D."/>
            <person name="Zeng Q."/>
            <person name="Oleary S."/>
            <person name="Yandava C."/>
            <person name="Denning D.W."/>
            <person name="Nierman W.C."/>
            <person name="Milne T."/>
            <person name="Madden K."/>
        </authorList>
    </citation>
    <scope>NUCLEOTIDE SEQUENCE [LARGE SCALE GENOMIC DNA]</scope>
    <source>
        <strain>NIH 2624 / FGSC A1156</strain>
    </source>
</reference>
<reference key="2">
    <citation type="journal article" date="1980" name="Proc. Natl. Acad. Sci. U.S.A.">
        <title>Mevinolin: a highly potent competitive inhibitor of hydroxymethylglutaryl-coenzyme A reductase and a cholesterol-lowering agent.</title>
        <authorList>
            <person name="Alberts A.W."/>
            <person name="Chen J."/>
            <person name="Kuron G."/>
            <person name="Hunt V."/>
            <person name="Huff J."/>
            <person name="Hoffman C."/>
            <person name="Rothrock J."/>
            <person name="Lopez M."/>
            <person name="Joshua H."/>
            <person name="Harris E."/>
            <person name="Patchett A."/>
            <person name="Monaghan R."/>
            <person name="Currie S."/>
            <person name="Stapley E."/>
            <person name="Albers-Schonberg G."/>
            <person name="Hensens O."/>
            <person name="Hirshfield J."/>
            <person name="Hoogsteen K."/>
            <person name="Liesch J."/>
            <person name="Springer J."/>
        </authorList>
    </citation>
    <scope>BIOTECHNOLOGY</scope>
</reference>
<reference key="3">
    <citation type="journal article" date="1999" name="Chem. Biol.">
        <title>Lovastatin biosynthesis in Aspergillus terreus: characterization of blocked mutants, enzyme activities and a multifunctional polyketide synthase gene.</title>
        <authorList>
            <person name="Hendrickson L."/>
            <person name="Davis C.R."/>
            <person name="Roach C."/>
            <person name="Nguyen D.K."/>
            <person name="Aldrich T."/>
            <person name="McAda P.C."/>
            <person name="Reeves C.D."/>
        </authorList>
    </citation>
    <scope>FUNCTION</scope>
</reference>
<reference key="4">
    <citation type="journal article" date="1999" name="Science">
        <title>Modulation of polyketide synthase activity by accessory proteins during lovastatin biosynthesis.</title>
        <authorList>
            <person name="Kennedy J."/>
            <person name="Auclair K."/>
            <person name="Kendrew S.G."/>
            <person name="Park C."/>
            <person name="Vederas J.C."/>
            <person name="Hutchinson C.R."/>
        </authorList>
    </citation>
    <scope>FUNCTION</scope>
</reference>
<reference key="5">
    <citation type="journal article" date="2003" name="Org. Biomol. Chem.">
        <title>Transformations of cyclic nonaketides by Aspergillus terreus mutants blocked for lovastatin biosynthesis at the lovA and lovC genes.</title>
        <authorList>
            <person name="Sorensen J.L."/>
            <person name="Auclair K."/>
            <person name="Kennedy J."/>
            <person name="Hutchinson C.R."/>
            <person name="Vederas J.C."/>
        </authorList>
    </citation>
    <scope>FUNCTION</scope>
    <scope>PATHWAY</scope>
    <scope>DISRUPTION PHENOTYPE</scope>
</reference>
<reference key="6">
    <citation type="journal article" date="2006" name="Chem. Biol.">
        <title>Biosynthesis of lovastatin analogs with a broadly specific acyltransferase.</title>
        <authorList>
            <person name="Xie X."/>
            <person name="Watanabe K."/>
            <person name="Wojcicki W.A."/>
            <person name="Wang C.C."/>
            <person name="Tang Y."/>
        </authorList>
    </citation>
    <scope>FUNCTION</scope>
</reference>
<reference key="7">
    <citation type="journal article" date="2009" name="Biotechnol. Bioeng.">
        <title>Rational improvement of simvastatin synthase solubility in Escherichia coli leads to higher whole-cell biocatalytic activity.</title>
        <authorList>
            <person name="Xie X."/>
            <person name="Pashkov I."/>
            <person name="Gao X."/>
            <person name="Guerrero J.L."/>
            <person name="Yeates T.O."/>
            <person name="Tang Y."/>
        </authorList>
    </citation>
    <scope>FUNCTION</scope>
</reference>
<reference key="8">
    <citation type="journal article" date="2009" name="Chem. Biol.">
        <title>Directed evolution and structural characterization of a simvastatin synthase.</title>
        <authorList>
            <person name="Gao X."/>
            <person name="Xie X."/>
            <person name="Pashkov I."/>
            <person name="Sawaya M.R."/>
            <person name="Laidman J."/>
            <person name="Zhang W."/>
            <person name="Cacho R."/>
            <person name="Yeates T.O."/>
            <person name="Tang Y."/>
        </authorList>
    </citation>
    <scope>FUNCTION</scope>
</reference>
<reference key="9">
    <citation type="journal article" date="2009" name="J. Am. Chem. Soc.">
        <title>Acyltransferase mediated polyketide release from a fungal megasynthase.</title>
        <authorList>
            <person name="Xie X."/>
            <person name="Meehan M.J."/>
            <person name="Xu W."/>
            <person name="Dorrestein P.C."/>
            <person name="Tang Y."/>
        </authorList>
    </citation>
    <scope>FUNCTION</scope>
</reference>
<reference key="10">
    <citation type="journal article" date="2009" name="Science">
        <title>Complete reconstitution of a highly reducing iterative polyketide synthase.</title>
        <authorList>
            <person name="Ma S.M."/>
            <person name="Li J.W."/>
            <person name="Choi J.W."/>
            <person name="Zhou H."/>
            <person name="Lee K.K."/>
            <person name="Moorthie V.A."/>
            <person name="Xie X."/>
            <person name="Kealey J.T."/>
            <person name="Da Silva N.A."/>
            <person name="Vederas J.C."/>
            <person name="Tang Y."/>
        </authorList>
    </citation>
    <scope>FUNCTION</scope>
    <scope>BIOTECHNOLOGY</scope>
</reference>
<reference key="11">
    <citation type="journal article" date="2011" name="Biochemistry">
        <title>FT-ICR-MS characterization of intermediates in the biosynthesis of the alpha-methylbutyrate side chain of lovastatin by the 277 kDa polyketide synthase LovF.</title>
        <authorList>
            <person name="Meehan M.J."/>
            <person name="Xie X."/>
            <person name="Zhao X."/>
            <person name="Xu W."/>
            <person name="Tang Y."/>
            <person name="Dorrestein P.C."/>
        </authorList>
    </citation>
    <scope>FUNCTION</scope>
</reference>
<reference key="12">
    <citation type="journal article" date="2011" name="J. Am. Chem. Soc.">
        <title>Double oxidation of the cyclic nonaketide dihydromonacolin L to monacolin J by a single cytochrome P450 monooxygenase, LovA.</title>
        <authorList>
            <person name="Barriuso J."/>
            <person name="Nguyen D.T."/>
            <person name="Li J.W."/>
            <person name="Roberts J.N."/>
            <person name="MacNevin G."/>
            <person name="Chaytor J.L."/>
            <person name="Marcus S.L."/>
            <person name="Vederas J.C."/>
            <person name="Ro D.K."/>
        </authorList>
    </citation>
    <scope>FUNCTION</scope>
    <scope>CATALYTIC ACTIVITY</scope>
    <scope>SUBCELLULAR LOCATION</scope>
    <scope>BIOPHYSICOCHEMICAL PROPERTIES</scope>
</reference>
<reference key="13">
    <citation type="journal article" date="2012" name="Proc. Natl. Acad. Sci. U.S.A.">
        <title>Crystal structure and biochemical studies of the trans-acting polyketide enoyl reductase LovC from lovastatin biosynthesis.</title>
        <authorList>
            <person name="Ames B.D."/>
            <person name="Nguyen C."/>
            <person name="Bruegger J."/>
            <person name="Smith P."/>
            <person name="Xu W."/>
            <person name="Ma S."/>
            <person name="Wong E."/>
            <person name="Wong S."/>
            <person name="Xie X."/>
            <person name="Li J.W."/>
            <person name="Vederas J.C."/>
            <person name="Tang Y."/>
            <person name="Tsai S.C."/>
        </authorList>
    </citation>
    <scope>FUNCTION</scope>
    <scope>BIOTECHNOLOGY</scope>
</reference>
<reference key="14">
    <citation type="journal article" date="2013" name="Angew. Chem. Int. Ed. Engl.">
        <title>LovG: the thioesterase required for dihydromonacolin L release and lovastatin nonaketide synthase turnover in lovastatin biosynthesis.</title>
        <authorList>
            <person name="Xu W."/>
            <person name="Chooi Y.H."/>
            <person name="Choi J.W."/>
            <person name="Li S."/>
            <person name="Vederas J.C."/>
            <person name="Da Silva N.A."/>
            <person name="Tang Y."/>
        </authorList>
    </citation>
    <scope>IDENTIFICATION</scope>
    <scope>FUNCTION</scope>
    <scope>CATALYTIC ACTIVITY</scope>
    <scope>PATHWAY</scope>
    <scope>DISRUPTION PHENOTYPE</scope>
</reference>
<reference key="15">
    <citation type="journal article" date="2014" name="Nat. Chem. Biol.">
        <title>The role of distant mutations and allosteric regulation on LovD active site dynamics.</title>
        <authorList>
            <person name="Jimenez-Oses G."/>
            <person name="Osuna S."/>
            <person name="Gao X."/>
            <person name="Sawaya M.R."/>
            <person name="Gilson L."/>
            <person name="Collier S.J."/>
            <person name="Huisman G.W."/>
            <person name="Yeates T.O."/>
            <person name="Tang Y."/>
            <person name="Houk K.N."/>
        </authorList>
    </citation>
    <scope>FUNCTION</scope>
</reference>
<reference key="16">
    <citation type="journal article" date="2017" name="Int. J. Mol. Sci.">
        <title>Simvastatin inhibits cell proliferation and migration in human anaplastic thyroid cancer.</title>
        <authorList>
            <person name="Chen M.C."/>
            <person name="Tsai Y.C."/>
            <person name="Tseng J.H."/>
            <person name="Liou J.J."/>
            <person name="Horng S."/>
            <person name="Wen H.C."/>
            <person name="Fan Y.C."/>
            <person name="Zhong W.B."/>
            <person name="Hsu S.P."/>
        </authorList>
    </citation>
    <scope>BIOTECHNOLOGY</scope>
</reference>
<reference key="17">
    <citation type="journal article" date="2018" name="Int. J. Mol. Sci.">
        <title>A synergistic anti-cancer effect of troglitazone and lovastatin in a human anaplastic thyroid cancer cell line and in a mouse xenograft model.</title>
        <authorList>
            <person name="Zhong W.B."/>
            <person name="Tsai Y.C."/>
            <person name="Chin L.H."/>
            <person name="Tseng J.H."/>
            <person name="Tang L.W."/>
            <person name="Horng S."/>
            <person name="Fan Y.C."/>
            <person name="Hsu S.P."/>
        </authorList>
    </citation>
    <scope>BIOTECHNOLOGY</scope>
</reference>
<reference key="18">
    <citation type="journal article" date="2025" name="Microbiol. Res.">
        <title>Development of a landing pad system for Aspergillus niger and its application in the overproduction of monacolin J.</title>
        <authorList>
            <person name="Yao L."/>
            <person name="Zheng J."/>
            <person name="Wang B."/>
            <person name="Pan L."/>
        </authorList>
    </citation>
    <scope>FUNCTION</scope>
    <scope>PATHWAY</scope>
</reference>
<evidence type="ECO:0000250" key="1">
    <source>
        <dbReference type="UniProtKB" id="P38777"/>
    </source>
</evidence>
<evidence type="ECO:0000269" key="2">
    <source>
    </source>
</evidence>
<evidence type="ECO:0000269" key="3">
    <source>
    </source>
</evidence>
<evidence type="ECO:0000269" key="4">
    <source>
    </source>
</evidence>
<evidence type="ECO:0000269" key="5">
    <source>
    </source>
</evidence>
<evidence type="ECO:0000269" key="6">
    <source>
    </source>
</evidence>
<evidence type="ECO:0000269" key="7">
    <source>
    </source>
</evidence>
<evidence type="ECO:0000269" key="8">
    <source>
    </source>
</evidence>
<evidence type="ECO:0000269" key="9">
    <source>
    </source>
</evidence>
<evidence type="ECO:0000269" key="10">
    <source>
    </source>
</evidence>
<evidence type="ECO:0000269" key="11">
    <source>
    </source>
</evidence>
<evidence type="ECO:0000269" key="12">
    <source>
    </source>
</evidence>
<evidence type="ECO:0000269" key="13">
    <source>
    </source>
</evidence>
<evidence type="ECO:0000269" key="14">
    <source>
    </source>
</evidence>
<evidence type="ECO:0000269" key="15">
    <source>
    </source>
</evidence>
<evidence type="ECO:0000269" key="16">
    <source>
    </source>
</evidence>
<evidence type="ECO:0000269" key="17">
    <source>
    </source>
</evidence>
<evidence type="ECO:0000269" key="18">
    <source>
    </source>
</evidence>
<evidence type="ECO:0000303" key="19">
    <source>
    </source>
</evidence>
<evidence type="ECO:0000305" key="20"/>